<feature type="chain" id="PRO_0000079106" description="Nucleoprotein">
    <location>
        <begin position="1"/>
        <end position="498"/>
    </location>
</feature>
<feature type="region of interest" description="Disordered" evidence="2">
    <location>
        <begin position="1"/>
        <end position="21"/>
    </location>
</feature>
<feature type="short sequence motif" description="Unconventional nuclear localization signal" evidence="1">
    <location>
        <begin position="1"/>
        <end position="18"/>
    </location>
</feature>
<feature type="short sequence motif" description="Bipartite nuclear localization signal" evidence="1">
    <location>
        <begin position="198"/>
        <end position="216"/>
    </location>
</feature>
<proteinExistence type="inferred from homology"/>
<organismHost>
    <name type="scientific">Aves</name>
    <dbReference type="NCBI Taxonomy" id="8782"/>
</organismHost>
<reference key="1">
    <citation type="journal article" date="1990" name="Virology">
        <title>Derivation of the nucleoproteins (NP) of influenza A viruses isolated from marine mammals.</title>
        <authorList>
            <person name="Mandler J."/>
            <person name="Gorman O.T."/>
            <person name="Ludwig S."/>
            <person name="Schroeder E."/>
            <person name="Fitch W.M."/>
            <person name="Webster R.G."/>
            <person name="Scholtissek C."/>
        </authorList>
    </citation>
    <scope>NUCLEOTIDE SEQUENCE [GENOMIC RNA]</scope>
</reference>
<comment type="function">
    <text evidence="1">Encapsidates the negative strand viral RNA, protecting it from nucleases. The encapsidated genomic RNA is termed the ribonucleoprotein (RNP) and serves as template for transcription and replication. The RNP needs to be localized in the host nucleus to start an infectious cycle, but is too large to diffuse through the nuclear pore complex. NP comprises at least 2 nuclear localization signals that are responsible for the active RNP import into the nucleus through cellular importin alpha/beta pathway. Later in the infection, nclear export of RNPs are mediated through viral proteins NEP interacting with M1 which binds nucleoproteins. It is possible that nucleoprotein binds directly host exportin-1/XPO1 and plays an active role in RNPs nuclear export. M1 interaction with RNP seems to hide nucleoprotein's nuclear localization signals. Soon after a virion infects a new cell, M1 dissociates from the RNP under acidification of the virion driven by M2 protein. Dissociation of M1 from RNP unmasks nucleoprotein's nuclear localization signals, targeting the RNP to the nucleus.</text>
</comment>
<comment type="subunit">
    <text evidence="1">Homomultimerizes to form the nucleocapsid. May bind host exportin-1/XPO1. Binds to viral genomic RNA. Protein-RNA contacts are mediated by a combination of electrostatic interactions between positively charged residues and the phosphate backbone and planar interactions between aromatic side chains and bases.</text>
</comment>
<comment type="subcellular location">
    <subcellularLocation>
        <location evidence="1">Virion</location>
    </subcellularLocation>
    <subcellularLocation>
        <location evidence="1">Host nucleus</location>
    </subcellularLocation>
</comment>
<comment type="PTM">
    <text evidence="1">Late in virus-infected cells, may be cleaved from a 56-kDa protein to a 53-kDa protein by a cellular caspase. This cleavage might be a marker for the onset of apoptosis in infected cells or have a specific function in virus host interaction.</text>
</comment>
<comment type="similarity">
    <text evidence="1">Belongs to the influenza viruses nucleoprotein family.</text>
</comment>
<sequence length="498" mass="56265">MASQGTKRSYEQMETGGERQNATEIRASVGRMVGGIGRFYIQMCTELKLSDYEGRLIQNSITIERMVLSAFDERRNKYLEEHPSAGKDPKKTGGPIYRRRDGKWMRELILYDKEEIRRIWRQANNGEDATAGLTHLMIWHSNLNDATYQRTRALVRTGMDPRMCSLMQGSTLPRRSGAAGAAVKGVGTMVMELIRMIKRGINDRNFWRGENGRRTRIAYERMCNILKGKFQTAAQRAMMDQVRESRNPGNAEIEDLIFLARSALILRGSVAHKSCLPACVYGLAVASGYDFEREGYSLVGIDPFRLLQNSQVFSLIRPNENPAHKSQLVWMACHSAAFEDLRVSSFIRGTRVVPRGQLSTRGVQIASNENMETMDSSTLELRSRYWAIRTRSGGNTNQQRASAGHISVQPTFSVQRNLPFERATIMAAFTGNTEGRTSDMRTEIIRMMESAKPEDVSFQGRGVFELSDEKATNPIVPSFDMSNEGSYFFGDNAEEYDN</sequence>
<dbReference type="EMBL" id="M27519">
    <property type="protein sequence ID" value="AAA43657.1"/>
    <property type="molecule type" value="Genomic_RNA"/>
</dbReference>
<dbReference type="SMR" id="P26054"/>
<dbReference type="GO" id="GO:0019029">
    <property type="term" value="C:helical viral capsid"/>
    <property type="evidence" value="ECO:0007669"/>
    <property type="project" value="UniProtKB-UniRule"/>
</dbReference>
<dbReference type="GO" id="GO:0043657">
    <property type="term" value="C:host cell"/>
    <property type="evidence" value="ECO:0007669"/>
    <property type="project" value="GOC"/>
</dbReference>
<dbReference type="GO" id="GO:0042025">
    <property type="term" value="C:host cell nucleus"/>
    <property type="evidence" value="ECO:0007669"/>
    <property type="project" value="UniProtKB-SubCell"/>
</dbReference>
<dbReference type="GO" id="GO:1990904">
    <property type="term" value="C:ribonucleoprotein complex"/>
    <property type="evidence" value="ECO:0007669"/>
    <property type="project" value="UniProtKB-KW"/>
</dbReference>
<dbReference type="GO" id="GO:0019013">
    <property type="term" value="C:viral nucleocapsid"/>
    <property type="evidence" value="ECO:0007669"/>
    <property type="project" value="UniProtKB-UniRule"/>
</dbReference>
<dbReference type="GO" id="GO:0003723">
    <property type="term" value="F:RNA binding"/>
    <property type="evidence" value="ECO:0007669"/>
    <property type="project" value="UniProtKB-UniRule"/>
</dbReference>
<dbReference type="GO" id="GO:0005198">
    <property type="term" value="F:structural molecule activity"/>
    <property type="evidence" value="ECO:0007669"/>
    <property type="project" value="UniProtKB-UniRule"/>
</dbReference>
<dbReference type="GO" id="GO:0046718">
    <property type="term" value="P:symbiont entry into host cell"/>
    <property type="evidence" value="ECO:0007669"/>
    <property type="project" value="UniProtKB-KW"/>
</dbReference>
<dbReference type="GO" id="GO:0075732">
    <property type="term" value="P:viral penetration into host nucleus"/>
    <property type="evidence" value="ECO:0007669"/>
    <property type="project" value="UniProtKB-UniRule"/>
</dbReference>
<dbReference type="HAMAP" id="MF_04070">
    <property type="entry name" value="INFV_NCAP"/>
    <property type="match status" value="1"/>
</dbReference>
<dbReference type="InterPro" id="IPR002141">
    <property type="entry name" value="Flu_NP"/>
</dbReference>
<dbReference type="Pfam" id="PF00506">
    <property type="entry name" value="Flu_NP"/>
    <property type="match status" value="1"/>
</dbReference>
<dbReference type="SUPFAM" id="SSF161003">
    <property type="entry name" value="flu NP-like"/>
    <property type="match status" value="1"/>
</dbReference>
<protein>
    <recommendedName>
        <fullName evidence="1">Nucleoprotein</fullName>
    </recommendedName>
    <alternativeName>
        <fullName evidence="1">Nucleocapsid protein</fullName>
        <shortName evidence="1">Protein N</shortName>
    </alternativeName>
</protein>
<gene>
    <name evidence="1" type="primary">NP</name>
</gene>
<evidence type="ECO:0000255" key="1">
    <source>
        <dbReference type="HAMAP-Rule" id="MF_04070"/>
    </source>
</evidence>
<evidence type="ECO:0000256" key="2">
    <source>
        <dbReference type="SAM" id="MobiDB-lite"/>
    </source>
</evidence>
<accession>P26054</accession>
<name>NCAP_I72A6</name>
<organism>
    <name type="scientific">Influenza A virus (strain A/Tern/Turkmenia/18/1972 H3N3)</name>
    <dbReference type="NCBI Taxonomy" id="384492"/>
    <lineage>
        <taxon>Viruses</taxon>
        <taxon>Riboviria</taxon>
        <taxon>Orthornavirae</taxon>
        <taxon>Negarnaviricota</taxon>
        <taxon>Polyploviricotina</taxon>
        <taxon>Insthoviricetes</taxon>
        <taxon>Articulavirales</taxon>
        <taxon>Orthomyxoviridae</taxon>
        <taxon>Alphainfluenzavirus</taxon>
        <taxon>Alphainfluenzavirus influenzae</taxon>
        <taxon>Influenza A virus</taxon>
    </lineage>
</organism>
<keyword id="KW-0167">Capsid protein</keyword>
<keyword id="KW-1139">Helical capsid protein</keyword>
<keyword id="KW-1048">Host nucleus</keyword>
<keyword id="KW-0945">Host-virus interaction</keyword>
<keyword id="KW-0687">Ribonucleoprotein</keyword>
<keyword id="KW-0694">RNA-binding</keyword>
<keyword id="KW-0543">Viral nucleoprotein</keyword>
<keyword id="KW-1163">Viral penetration into host nucleus</keyword>
<keyword id="KW-0946">Virion</keyword>
<keyword id="KW-1160">Virus entry into host cell</keyword>